<protein>
    <recommendedName>
        <fullName evidence="1">Probable glycine dehydrogenase (decarboxylating) subunit 1</fullName>
        <ecNumber evidence="1">1.4.4.2</ecNumber>
    </recommendedName>
    <alternativeName>
        <fullName evidence="1">Glycine cleavage system P-protein subunit 1</fullName>
    </alternativeName>
    <alternativeName>
        <fullName evidence="1">Glycine decarboxylase subunit 1</fullName>
    </alternativeName>
    <alternativeName>
        <fullName evidence="1">Glycine dehydrogenase (aminomethyl-transferring) subunit 1</fullName>
    </alternativeName>
</protein>
<comment type="function">
    <text evidence="1">The glycine cleavage system catalyzes the degradation of glycine. The P protein binds the alpha-amino group of glycine through its pyridoxal phosphate cofactor; CO(2) is released and the remaining methylamine moiety is then transferred to the lipoamide cofactor of the H protein.</text>
</comment>
<comment type="catalytic activity">
    <reaction evidence="1">
        <text>N(6)-[(R)-lipoyl]-L-lysyl-[glycine-cleavage complex H protein] + glycine + H(+) = N(6)-[(R)-S(8)-aminomethyldihydrolipoyl]-L-lysyl-[glycine-cleavage complex H protein] + CO2</text>
        <dbReference type="Rhea" id="RHEA:24304"/>
        <dbReference type="Rhea" id="RHEA-COMP:10494"/>
        <dbReference type="Rhea" id="RHEA-COMP:10495"/>
        <dbReference type="ChEBI" id="CHEBI:15378"/>
        <dbReference type="ChEBI" id="CHEBI:16526"/>
        <dbReference type="ChEBI" id="CHEBI:57305"/>
        <dbReference type="ChEBI" id="CHEBI:83099"/>
        <dbReference type="ChEBI" id="CHEBI:83143"/>
        <dbReference type="EC" id="1.4.4.2"/>
    </reaction>
</comment>
<comment type="subunit">
    <text evidence="1">The glycine cleavage system is composed of four proteins: P, T, L and H. In this organism, the P 'protein' is a heterodimer of two subunits.</text>
</comment>
<comment type="similarity">
    <text evidence="1">Belongs to the GcvP family. N-terminal subunit subfamily.</text>
</comment>
<dbReference type="EC" id="1.4.4.2" evidence="1"/>
<dbReference type="EMBL" id="CP000103">
    <property type="protein sequence ID" value="ABB73520.1"/>
    <property type="molecule type" value="Genomic_DNA"/>
</dbReference>
<dbReference type="RefSeq" id="WP_011379574.1">
    <property type="nucleotide sequence ID" value="NC_007614.1"/>
</dbReference>
<dbReference type="SMR" id="Q2YCK1"/>
<dbReference type="STRING" id="323848.Nmul_A0212"/>
<dbReference type="KEGG" id="nmu:Nmul_A0212"/>
<dbReference type="eggNOG" id="COG0403">
    <property type="taxonomic scope" value="Bacteria"/>
</dbReference>
<dbReference type="HOGENOM" id="CLU_004620_0_2_4"/>
<dbReference type="OrthoDB" id="9801272at2"/>
<dbReference type="Proteomes" id="UP000002718">
    <property type="component" value="Chromosome"/>
</dbReference>
<dbReference type="GO" id="GO:0004375">
    <property type="term" value="F:glycine dehydrogenase (decarboxylating) activity"/>
    <property type="evidence" value="ECO:0007669"/>
    <property type="project" value="UniProtKB-EC"/>
</dbReference>
<dbReference type="GO" id="GO:0019464">
    <property type="term" value="P:glycine decarboxylation via glycine cleavage system"/>
    <property type="evidence" value="ECO:0007669"/>
    <property type="project" value="UniProtKB-UniRule"/>
</dbReference>
<dbReference type="GO" id="GO:0009116">
    <property type="term" value="P:nucleoside metabolic process"/>
    <property type="evidence" value="ECO:0007669"/>
    <property type="project" value="InterPro"/>
</dbReference>
<dbReference type="CDD" id="cd00613">
    <property type="entry name" value="GDC-P"/>
    <property type="match status" value="1"/>
</dbReference>
<dbReference type="Gene3D" id="3.90.1150.10">
    <property type="entry name" value="Aspartate Aminotransferase, domain 1"/>
    <property type="match status" value="1"/>
</dbReference>
<dbReference type="Gene3D" id="3.40.640.10">
    <property type="entry name" value="Type I PLP-dependent aspartate aminotransferase-like (Major domain)"/>
    <property type="match status" value="1"/>
</dbReference>
<dbReference type="HAMAP" id="MF_00712">
    <property type="entry name" value="GcvPA"/>
    <property type="match status" value="1"/>
</dbReference>
<dbReference type="InterPro" id="IPR023010">
    <property type="entry name" value="GcvPA"/>
</dbReference>
<dbReference type="InterPro" id="IPR049315">
    <property type="entry name" value="GDC-P_N"/>
</dbReference>
<dbReference type="InterPro" id="IPR020581">
    <property type="entry name" value="GDC_P"/>
</dbReference>
<dbReference type="InterPro" id="IPR015424">
    <property type="entry name" value="PyrdxlP-dep_Trfase"/>
</dbReference>
<dbReference type="InterPro" id="IPR015421">
    <property type="entry name" value="PyrdxlP-dep_Trfase_major"/>
</dbReference>
<dbReference type="InterPro" id="IPR015422">
    <property type="entry name" value="PyrdxlP-dep_Trfase_small"/>
</dbReference>
<dbReference type="NCBIfam" id="NF001696">
    <property type="entry name" value="PRK00451.1"/>
    <property type="match status" value="1"/>
</dbReference>
<dbReference type="PANTHER" id="PTHR42806">
    <property type="entry name" value="GLYCINE CLEAVAGE SYSTEM P-PROTEIN"/>
    <property type="match status" value="1"/>
</dbReference>
<dbReference type="PANTHER" id="PTHR42806:SF1">
    <property type="entry name" value="GLYCINE DEHYDROGENASE (DECARBOXYLATING)"/>
    <property type="match status" value="1"/>
</dbReference>
<dbReference type="Pfam" id="PF02347">
    <property type="entry name" value="GDC-P"/>
    <property type="match status" value="1"/>
</dbReference>
<dbReference type="PIRSF" id="PIRSF006815">
    <property type="entry name" value="GcvPA"/>
    <property type="match status" value="1"/>
</dbReference>
<dbReference type="SUPFAM" id="SSF53383">
    <property type="entry name" value="PLP-dependent transferases"/>
    <property type="match status" value="1"/>
</dbReference>
<name>GCSPA_NITMU</name>
<keyword id="KW-0560">Oxidoreductase</keyword>
<keyword id="KW-1185">Reference proteome</keyword>
<evidence type="ECO:0000255" key="1">
    <source>
        <dbReference type="HAMAP-Rule" id="MF_00712"/>
    </source>
</evidence>
<feature type="chain" id="PRO_1000045671" description="Probable glycine dehydrogenase (decarboxylating) subunit 1">
    <location>
        <begin position="1"/>
        <end position="452"/>
    </location>
</feature>
<gene>
    <name evidence="1" type="primary">gcvPA</name>
    <name type="ordered locus">Nmul_A0212</name>
</gene>
<accession>Q2YCK1</accession>
<reference key="1">
    <citation type="submission" date="2005-08" db="EMBL/GenBank/DDBJ databases">
        <title>Complete sequence of chromosome 1 of Nitrosospira multiformis ATCC 25196.</title>
        <authorList>
            <person name="Copeland A."/>
            <person name="Lucas S."/>
            <person name="Lapidus A."/>
            <person name="Barry K."/>
            <person name="Detter J.C."/>
            <person name="Glavina T."/>
            <person name="Hammon N."/>
            <person name="Israni S."/>
            <person name="Pitluck S."/>
            <person name="Chain P."/>
            <person name="Malfatti S."/>
            <person name="Shin M."/>
            <person name="Vergez L."/>
            <person name="Schmutz J."/>
            <person name="Larimer F."/>
            <person name="Land M."/>
            <person name="Hauser L."/>
            <person name="Kyrpides N."/>
            <person name="Lykidis A."/>
            <person name="Richardson P."/>
        </authorList>
    </citation>
    <scope>NUCLEOTIDE SEQUENCE [LARGE SCALE GENOMIC DNA]</scope>
    <source>
        <strain>ATCC 25196 / NCIMB 11849 / C 71</strain>
    </source>
</reference>
<sequence>MPFIPHTEEDIQAMLASIGANSIDELFDEIPPALKTGSLKRVPPGLSEMEISRLMLERAEQDGRYLNFIGAGAYEHHIPAAVWQIATRGEFYSSYTPYQAEASQGTLQLLYEYQTMMASLTGMDVSNASMYDGASALAEAALMAVRSHRTSRRILIPQTVHPVYRSVVRAIVKNQGIEVVEVPYDKLSGQTSLDGLKNFGSEEFAALVIPQPNFFGVLEDVDTLTDWAQSRDAFAIAVVNPMALAMLTPPGEWGEKGADIAVGEGQPLGIPLSSGGPYFGFMACKQPLVRQMPGRIIGRTTDQEGSDGFVLTLQAREQHIRRSKATSNICTNQGLMVTAATIYLALLGPEGLRRTAAQSHANTAALLEKLEKLKGVKRVFSGPVFHEAVISLPRPSASVLQALEARRILGGLNLKEYYPELGDAVLVCATETKTSGDMENYVTQLGEVIRNS</sequence>
<organism>
    <name type="scientific">Nitrosospira multiformis (strain ATCC 25196 / NCIMB 11849 / C 71)</name>
    <dbReference type="NCBI Taxonomy" id="323848"/>
    <lineage>
        <taxon>Bacteria</taxon>
        <taxon>Pseudomonadati</taxon>
        <taxon>Pseudomonadota</taxon>
        <taxon>Betaproteobacteria</taxon>
        <taxon>Nitrosomonadales</taxon>
        <taxon>Nitrosomonadaceae</taxon>
        <taxon>Nitrosospira</taxon>
    </lineage>
</organism>
<proteinExistence type="inferred from homology"/>